<dbReference type="EC" id="2.7.11.1" evidence="1"/>
<dbReference type="EMBL" id="CP000673">
    <property type="protein sequence ID" value="EDK35163.1"/>
    <property type="molecule type" value="Genomic_DNA"/>
</dbReference>
<dbReference type="RefSeq" id="WP_012103498.1">
    <property type="nucleotide sequence ID" value="NC_009706.1"/>
</dbReference>
<dbReference type="SMR" id="A5N217"/>
<dbReference type="STRING" id="431943.CKL_3155"/>
<dbReference type="KEGG" id="ckl:CKL_3155"/>
<dbReference type="eggNOG" id="COG2172">
    <property type="taxonomic scope" value="Bacteria"/>
</dbReference>
<dbReference type="HOGENOM" id="CLU_090336_11_0_9"/>
<dbReference type="Proteomes" id="UP000002411">
    <property type="component" value="Chromosome"/>
</dbReference>
<dbReference type="GO" id="GO:0005524">
    <property type="term" value="F:ATP binding"/>
    <property type="evidence" value="ECO:0007669"/>
    <property type="project" value="UniProtKB-KW"/>
</dbReference>
<dbReference type="GO" id="GO:0106310">
    <property type="term" value="F:protein serine kinase activity"/>
    <property type="evidence" value="ECO:0007669"/>
    <property type="project" value="RHEA"/>
</dbReference>
<dbReference type="GO" id="GO:0004674">
    <property type="term" value="F:protein serine/threonine kinase activity"/>
    <property type="evidence" value="ECO:0007669"/>
    <property type="project" value="UniProtKB-KW"/>
</dbReference>
<dbReference type="GO" id="GO:0016989">
    <property type="term" value="F:sigma factor antagonist activity"/>
    <property type="evidence" value="ECO:0007669"/>
    <property type="project" value="InterPro"/>
</dbReference>
<dbReference type="GO" id="GO:0030436">
    <property type="term" value="P:asexual sporulation"/>
    <property type="evidence" value="ECO:0007669"/>
    <property type="project" value="UniProtKB-UniRule"/>
</dbReference>
<dbReference type="GO" id="GO:0042174">
    <property type="term" value="P:negative regulation of sporulation resulting in formation of a cellular spore"/>
    <property type="evidence" value="ECO:0007669"/>
    <property type="project" value="InterPro"/>
</dbReference>
<dbReference type="GO" id="GO:0030435">
    <property type="term" value="P:sporulation resulting in formation of a cellular spore"/>
    <property type="evidence" value="ECO:0007669"/>
    <property type="project" value="UniProtKB-KW"/>
</dbReference>
<dbReference type="Gene3D" id="3.30.565.10">
    <property type="entry name" value="Histidine kinase-like ATPase, C-terminal domain"/>
    <property type="match status" value="1"/>
</dbReference>
<dbReference type="HAMAP" id="MF_00637">
    <property type="entry name" value="Anti_sigma_F"/>
    <property type="match status" value="1"/>
</dbReference>
<dbReference type="InterPro" id="IPR050267">
    <property type="entry name" value="Anti-sigma-factor_SerPK"/>
</dbReference>
<dbReference type="InterPro" id="IPR010194">
    <property type="entry name" value="Anti-sigma_F"/>
</dbReference>
<dbReference type="InterPro" id="IPR036890">
    <property type="entry name" value="HATPase_C_sf"/>
</dbReference>
<dbReference type="NCBIfam" id="TIGR01925">
    <property type="entry name" value="spIIAB"/>
    <property type="match status" value="1"/>
</dbReference>
<dbReference type="PANTHER" id="PTHR35526:SF3">
    <property type="entry name" value="ANTI-SIGMA-F FACTOR RSBW"/>
    <property type="match status" value="1"/>
</dbReference>
<dbReference type="PANTHER" id="PTHR35526">
    <property type="entry name" value="ANTI-SIGMA-F FACTOR RSBW-RELATED"/>
    <property type="match status" value="1"/>
</dbReference>
<dbReference type="Pfam" id="PF13581">
    <property type="entry name" value="HATPase_c_2"/>
    <property type="match status" value="1"/>
</dbReference>
<dbReference type="SMART" id="SM00387">
    <property type="entry name" value="HATPase_c"/>
    <property type="match status" value="1"/>
</dbReference>
<dbReference type="SUPFAM" id="SSF55874">
    <property type="entry name" value="ATPase domain of HSP90 chaperone/DNA topoisomerase II/histidine kinase"/>
    <property type="match status" value="1"/>
</dbReference>
<comment type="function">
    <text evidence="1">Binds to sigma F and blocks its ability to form an RNA polymerase holoenzyme (E-sigma F). Phosphorylates SpoIIAA on a serine residue. This phosphorylation may enable SpoIIAA to act as an anti-anti-sigma factor that counteracts SpoIIAB and thus releases sigma F from inhibition.</text>
</comment>
<comment type="catalytic activity">
    <reaction evidence="1">
        <text>L-seryl-[protein] + ATP = O-phospho-L-seryl-[protein] + ADP + H(+)</text>
        <dbReference type="Rhea" id="RHEA:17989"/>
        <dbReference type="Rhea" id="RHEA-COMP:9863"/>
        <dbReference type="Rhea" id="RHEA-COMP:11604"/>
        <dbReference type="ChEBI" id="CHEBI:15378"/>
        <dbReference type="ChEBI" id="CHEBI:29999"/>
        <dbReference type="ChEBI" id="CHEBI:30616"/>
        <dbReference type="ChEBI" id="CHEBI:83421"/>
        <dbReference type="ChEBI" id="CHEBI:456216"/>
        <dbReference type="EC" id="2.7.11.1"/>
    </reaction>
</comment>
<comment type="catalytic activity">
    <reaction evidence="1">
        <text>L-threonyl-[protein] + ATP = O-phospho-L-threonyl-[protein] + ADP + H(+)</text>
        <dbReference type="Rhea" id="RHEA:46608"/>
        <dbReference type="Rhea" id="RHEA-COMP:11060"/>
        <dbReference type="Rhea" id="RHEA-COMP:11605"/>
        <dbReference type="ChEBI" id="CHEBI:15378"/>
        <dbReference type="ChEBI" id="CHEBI:30013"/>
        <dbReference type="ChEBI" id="CHEBI:30616"/>
        <dbReference type="ChEBI" id="CHEBI:61977"/>
        <dbReference type="ChEBI" id="CHEBI:456216"/>
        <dbReference type="EC" id="2.7.11.1"/>
    </reaction>
</comment>
<comment type="similarity">
    <text evidence="1">Belongs to the anti-sigma-factor family.</text>
</comment>
<sequence length="142" mass="15833">MYDNSMKIEFISKSQNESFARVSVAAFVSQLDPTLDELTDVKTAVSEAVTNSIIHGYENKEGIVKIEASIKGRELILIVEDNGIGIENIDMAMQPLYTSKPELERSGMGFTVMETFMDSLQVESEKNKGTRLIMKKVFNSLS</sequence>
<keyword id="KW-0067">ATP-binding</keyword>
<keyword id="KW-0418">Kinase</keyword>
<keyword id="KW-0547">Nucleotide-binding</keyword>
<keyword id="KW-1185">Reference proteome</keyword>
<keyword id="KW-0723">Serine/threonine-protein kinase</keyword>
<keyword id="KW-0749">Sporulation</keyword>
<keyword id="KW-0808">Transferase</keyword>
<name>SP2AB_CLOK5</name>
<protein>
    <recommendedName>
        <fullName evidence="1">Anti-sigma F factor</fullName>
        <ecNumber evidence="1">2.7.11.1</ecNumber>
    </recommendedName>
    <alternativeName>
        <fullName evidence="1">Stage II sporulation protein AB</fullName>
    </alternativeName>
</protein>
<organism>
    <name type="scientific">Clostridium kluyveri (strain ATCC 8527 / DSM 555 / NBRC 12016 / NCIMB 10680 / K1)</name>
    <dbReference type="NCBI Taxonomy" id="431943"/>
    <lineage>
        <taxon>Bacteria</taxon>
        <taxon>Bacillati</taxon>
        <taxon>Bacillota</taxon>
        <taxon>Clostridia</taxon>
        <taxon>Eubacteriales</taxon>
        <taxon>Clostridiaceae</taxon>
        <taxon>Clostridium</taxon>
    </lineage>
</organism>
<evidence type="ECO:0000255" key="1">
    <source>
        <dbReference type="HAMAP-Rule" id="MF_00637"/>
    </source>
</evidence>
<proteinExistence type="inferred from homology"/>
<gene>
    <name evidence="1" type="primary">spoIIAB</name>
    <name type="ordered locus">CKL_3155</name>
</gene>
<accession>A5N217</accession>
<feature type="chain" id="PRO_1000130810" description="Anti-sigma F factor">
    <location>
        <begin position="1"/>
        <end position="142"/>
    </location>
</feature>
<reference key="1">
    <citation type="journal article" date="2008" name="Proc. Natl. Acad. Sci. U.S.A.">
        <title>The genome of Clostridium kluyveri, a strict anaerobe with unique metabolic features.</title>
        <authorList>
            <person name="Seedorf H."/>
            <person name="Fricke W.F."/>
            <person name="Veith B."/>
            <person name="Brueggemann H."/>
            <person name="Liesegang H."/>
            <person name="Strittmatter A."/>
            <person name="Miethke M."/>
            <person name="Buckel W."/>
            <person name="Hinderberger J."/>
            <person name="Li F."/>
            <person name="Hagemeier C."/>
            <person name="Thauer R.K."/>
            <person name="Gottschalk G."/>
        </authorList>
    </citation>
    <scope>NUCLEOTIDE SEQUENCE [LARGE SCALE GENOMIC DNA]</scope>
    <source>
        <strain>ATCC 8527 / DSM 555 / NBRC 12016 / NCIMB 10680 / K1</strain>
    </source>
</reference>